<gene>
    <name type="ordered locus">MIMI_R355</name>
</gene>
<protein>
    <recommendedName>
        <fullName>Putative thiol protease R355</fullName>
        <ecNumber>3.4.22.-</ecNumber>
    </recommendedName>
</protein>
<organism>
    <name type="scientific">Acanthamoeba polyphaga mimivirus</name>
    <name type="common">APMV</name>
    <dbReference type="NCBI Taxonomy" id="212035"/>
    <lineage>
        <taxon>Viruses</taxon>
        <taxon>Varidnaviria</taxon>
        <taxon>Bamfordvirae</taxon>
        <taxon>Nucleocytoviricota</taxon>
        <taxon>Megaviricetes</taxon>
        <taxon>Imitervirales</taxon>
        <taxon>Mimiviridae</taxon>
        <taxon>Megamimivirinae</taxon>
        <taxon>Mimivirus</taxon>
        <taxon>Mimivirus bradfordmassiliense</taxon>
    </lineage>
</organism>
<organismHost>
    <name type="scientific">Acanthamoeba polyphaga</name>
    <name type="common">Amoeba</name>
    <dbReference type="NCBI Taxonomy" id="5757"/>
</organismHost>
<feature type="chain" id="PRO_0000244782" description="Putative thiol protease R355">
    <location>
        <begin position="1"/>
        <end position="302"/>
    </location>
</feature>
<feature type="active site" evidence="1">
    <location>
        <position position="182"/>
    </location>
</feature>
<feature type="active site" evidence="1">
    <location>
        <position position="199"/>
    </location>
</feature>
<feature type="active site" description="Nucleophile" evidence="1">
    <location>
        <position position="244"/>
    </location>
</feature>
<evidence type="ECO:0000250" key="1"/>
<evidence type="ECO:0000269" key="2">
    <source>
    </source>
</evidence>
<evidence type="ECO:0000305" key="3"/>
<reference key="1">
    <citation type="journal article" date="2004" name="Science">
        <title>The 1.2-megabase genome sequence of Mimivirus.</title>
        <authorList>
            <person name="Raoult D."/>
            <person name="Audic S."/>
            <person name="Robert C."/>
            <person name="Abergel C."/>
            <person name="Renesto P."/>
            <person name="Ogata H."/>
            <person name="La Scola B."/>
            <person name="Susan M."/>
            <person name="Claverie J.-M."/>
        </authorList>
    </citation>
    <scope>NUCLEOTIDE SEQUENCE [LARGE SCALE GENOMIC DNA]</scope>
    <source>
        <strain>Rowbotham-Bradford</strain>
    </source>
</reference>
<reference key="2">
    <citation type="journal article" date="2006" name="J. Virol.">
        <title>Mimivirus giant particles incorporate a large fraction of anonymous and unique gene products.</title>
        <authorList>
            <person name="Renesto P."/>
            <person name="Abergel C."/>
            <person name="Decloquement P."/>
            <person name="Moinier D."/>
            <person name="Azza S."/>
            <person name="Ogata H."/>
            <person name="Fourquet P."/>
            <person name="Gorvel J.-P."/>
            <person name="Claverie J.-M."/>
            <person name="Raoult D."/>
        </authorList>
    </citation>
    <scope>IDENTIFICATION BY MASS SPECTROMETRY [LARGE SCALE ANALYSIS]</scope>
    <scope>SUBCELLULAR LOCATION</scope>
</reference>
<dbReference type="EC" id="3.4.22.-"/>
<dbReference type="EMBL" id="AY653733">
    <property type="protein sequence ID" value="AAV50624.1"/>
    <property type="molecule type" value="Genomic_DNA"/>
</dbReference>
<dbReference type="SMR" id="Q5UQV0"/>
<dbReference type="KEGG" id="vg:9924974"/>
<dbReference type="OrthoDB" id="19241at10239"/>
<dbReference type="Proteomes" id="UP000001134">
    <property type="component" value="Genome"/>
</dbReference>
<dbReference type="GO" id="GO:0044423">
    <property type="term" value="C:virion component"/>
    <property type="evidence" value="ECO:0007669"/>
    <property type="project" value="UniProtKB-KW"/>
</dbReference>
<dbReference type="GO" id="GO:0004197">
    <property type="term" value="F:cysteine-type endopeptidase activity"/>
    <property type="evidence" value="ECO:0007669"/>
    <property type="project" value="InterPro"/>
</dbReference>
<dbReference type="GO" id="GO:0006508">
    <property type="term" value="P:proteolysis"/>
    <property type="evidence" value="ECO:0007669"/>
    <property type="project" value="UniProtKB-KW"/>
</dbReference>
<dbReference type="GO" id="GO:0019082">
    <property type="term" value="P:viral protein processing"/>
    <property type="evidence" value="ECO:0007669"/>
    <property type="project" value="InterPro"/>
</dbReference>
<dbReference type="Gene3D" id="3.40.395.10">
    <property type="entry name" value="Adenoviral Proteinase, Chain A"/>
    <property type="match status" value="1"/>
</dbReference>
<dbReference type="InterPro" id="IPR038765">
    <property type="entry name" value="Papain-like_cys_pep_sf"/>
</dbReference>
<dbReference type="InterPro" id="IPR003653">
    <property type="entry name" value="Peptidase_C48_C"/>
</dbReference>
<dbReference type="InterPro" id="IPR016510">
    <property type="entry name" value="VPRT"/>
</dbReference>
<dbReference type="Pfam" id="PF02902">
    <property type="entry name" value="Peptidase_C48"/>
    <property type="match status" value="1"/>
</dbReference>
<dbReference type="PIRSF" id="PIRSF007159">
    <property type="entry name" value="Peptidase_ASVF"/>
    <property type="match status" value="1"/>
</dbReference>
<dbReference type="SUPFAM" id="SSF54001">
    <property type="entry name" value="Cysteine proteinases"/>
    <property type="match status" value="1"/>
</dbReference>
<dbReference type="PROSITE" id="PS50600">
    <property type="entry name" value="ULP_PROTEASE"/>
    <property type="match status" value="1"/>
</dbReference>
<comment type="subcellular location">
    <subcellularLocation>
        <location evidence="2">Virion</location>
    </subcellularLocation>
</comment>
<comment type="similarity">
    <text evidence="3">Belongs to the peptidase C48 family.</text>
</comment>
<sequence length="302" mass="34896">MNICGPQRYDKENNTCFNVDQLVEMAKAYNRYLSKTKLNPSRNYHFGDADLINIKSDKKYLLKQFKDRFGKICGSDEICLTHQAFMGELVGEMKDDILFGTFRSEGPSKSTEWLSTIDINQIMVPYENIYPNFKFIGAVPADCDQVSVCPLYNINYDKLMDEGINYIATIFNHDRYGQPGSHWVAMFVDINNGKLYYCDSNGKEPTKYIENSIEKFAQFYKRKTGNDIIYKYNKNSYQKDGSECGVYSCNFIIRMLSGEPFDNIVSNSLSFQEINSCRNVYFRNQPSKFKPHKLCDPTNSGK</sequence>
<name>YR355_MIMIV</name>
<keyword id="KW-0378">Hydrolase</keyword>
<keyword id="KW-0645">Protease</keyword>
<keyword id="KW-1185">Reference proteome</keyword>
<keyword id="KW-0788">Thiol protease</keyword>
<keyword id="KW-0946">Virion</keyword>
<proteinExistence type="evidence at protein level"/>
<accession>Q5UQV0</accession>